<dbReference type="EC" id="6.1.1.7" evidence="1"/>
<dbReference type="EMBL" id="BX897699">
    <property type="protein sequence ID" value="CAF27813.1"/>
    <property type="molecule type" value="Genomic_DNA"/>
</dbReference>
<dbReference type="RefSeq" id="WP_011180886.1">
    <property type="nucleotide sequence ID" value="NZ_LRIJ02000001.1"/>
</dbReference>
<dbReference type="SMR" id="Q6G2Z4"/>
<dbReference type="PaxDb" id="283166-BH10220"/>
<dbReference type="EnsemblBacteria" id="CAF27813">
    <property type="protein sequence ID" value="CAF27813"/>
    <property type="gene ID" value="BH10220"/>
</dbReference>
<dbReference type="GeneID" id="92985292"/>
<dbReference type="KEGG" id="bhe:BH10220"/>
<dbReference type="eggNOG" id="COG0013">
    <property type="taxonomic scope" value="Bacteria"/>
</dbReference>
<dbReference type="OrthoDB" id="9803884at2"/>
<dbReference type="Proteomes" id="UP000000421">
    <property type="component" value="Chromosome"/>
</dbReference>
<dbReference type="GO" id="GO:0005829">
    <property type="term" value="C:cytosol"/>
    <property type="evidence" value="ECO:0007669"/>
    <property type="project" value="TreeGrafter"/>
</dbReference>
<dbReference type="GO" id="GO:0004813">
    <property type="term" value="F:alanine-tRNA ligase activity"/>
    <property type="evidence" value="ECO:0007669"/>
    <property type="project" value="UniProtKB-UniRule"/>
</dbReference>
<dbReference type="GO" id="GO:0002161">
    <property type="term" value="F:aminoacyl-tRNA deacylase activity"/>
    <property type="evidence" value="ECO:0007669"/>
    <property type="project" value="TreeGrafter"/>
</dbReference>
<dbReference type="GO" id="GO:0005524">
    <property type="term" value="F:ATP binding"/>
    <property type="evidence" value="ECO:0007669"/>
    <property type="project" value="UniProtKB-UniRule"/>
</dbReference>
<dbReference type="GO" id="GO:0000049">
    <property type="term" value="F:tRNA binding"/>
    <property type="evidence" value="ECO:0007669"/>
    <property type="project" value="UniProtKB-KW"/>
</dbReference>
<dbReference type="GO" id="GO:0008270">
    <property type="term" value="F:zinc ion binding"/>
    <property type="evidence" value="ECO:0007669"/>
    <property type="project" value="UniProtKB-UniRule"/>
</dbReference>
<dbReference type="GO" id="GO:0006419">
    <property type="term" value="P:alanyl-tRNA aminoacylation"/>
    <property type="evidence" value="ECO:0007669"/>
    <property type="project" value="UniProtKB-UniRule"/>
</dbReference>
<dbReference type="GO" id="GO:0045892">
    <property type="term" value="P:negative regulation of DNA-templated transcription"/>
    <property type="evidence" value="ECO:0007669"/>
    <property type="project" value="TreeGrafter"/>
</dbReference>
<dbReference type="CDD" id="cd00673">
    <property type="entry name" value="AlaRS_core"/>
    <property type="match status" value="1"/>
</dbReference>
<dbReference type="FunFam" id="2.40.30.130:FF:000001">
    <property type="entry name" value="Alanine--tRNA ligase"/>
    <property type="match status" value="1"/>
</dbReference>
<dbReference type="FunFam" id="3.10.310.40:FF:000001">
    <property type="entry name" value="Alanine--tRNA ligase"/>
    <property type="match status" value="1"/>
</dbReference>
<dbReference type="FunFam" id="3.30.54.20:FF:000001">
    <property type="entry name" value="Alanine--tRNA ligase"/>
    <property type="match status" value="1"/>
</dbReference>
<dbReference type="FunFam" id="3.30.930.10:FF:000004">
    <property type="entry name" value="Alanine--tRNA ligase"/>
    <property type="match status" value="1"/>
</dbReference>
<dbReference type="FunFam" id="3.30.980.10:FF:000004">
    <property type="entry name" value="Alanine--tRNA ligase, cytoplasmic"/>
    <property type="match status" value="1"/>
</dbReference>
<dbReference type="Gene3D" id="2.40.30.130">
    <property type="match status" value="1"/>
</dbReference>
<dbReference type="Gene3D" id="3.10.310.40">
    <property type="match status" value="1"/>
</dbReference>
<dbReference type="Gene3D" id="3.30.54.20">
    <property type="match status" value="1"/>
</dbReference>
<dbReference type="Gene3D" id="6.10.250.550">
    <property type="match status" value="1"/>
</dbReference>
<dbReference type="Gene3D" id="3.30.930.10">
    <property type="entry name" value="Bira Bifunctional Protein, Domain 2"/>
    <property type="match status" value="1"/>
</dbReference>
<dbReference type="Gene3D" id="3.30.980.10">
    <property type="entry name" value="Threonyl-trna Synthetase, Chain A, domain 2"/>
    <property type="match status" value="1"/>
</dbReference>
<dbReference type="HAMAP" id="MF_00036_B">
    <property type="entry name" value="Ala_tRNA_synth_B"/>
    <property type="match status" value="1"/>
</dbReference>
<dbReference type="InterPro" id="IPR045864">
    <property type="entry name" value="aa-tRNA-synth_II/BPL/LPL"/>
</dbReference>
<dbReference type="InterPro" id="IPR002318">
    <property type="entry name" value="Ala-tRNA-lgiase_IIc"/>
</dbReference>
<dbReference type="InterPro" id="IPR018162">
    <property type="entry name" value="Ala-tRNA-ligase_IIc_anticod-bd"/>
</dbReference>
<dbReference type="InterPro" id="IPR018165">
    <property type="entry name" value="Ala-tRNA-synth_IIc_core"/>
</dbReference>
<dbReference type="InterPro" id="IPR018164">
    <property type="entry name" value="Ala-tRNA-synth_IIc_N"/>
</dbReference>
<dbReference type="InterPro" id="IPR050058">
    <property type="entry name" value="Ala-tRNA_ligase"/>
</dbReference>
<dbReference type="InterPro" id="IPR023033">
    <property type="entry name" value="Ala_tRNA_ligase_euk/bac"/>
</dbReference>
<dbReference type="InterPro" id="IPR003156">
    <property type="entry name" value="DHHA1_dom"/>
</dbReference>
<dbReference type="InterPro" id="IPR018163">
    <property type="entry name" value="Thr/Ala-tRNA-synth_IIc_edit"/>
</dbReference>
<dbReference type="InterPro" id="IPR009000">
    <property type="entry name" value="Transl_B-barrel_sf"/>
</dbReference>
<dbReference type="InterPro" id="IPR012947">
    <property type="entry name" value="tRNA_SAD"/>
</dbReference>
<dbReference type="NCBIfam" id="TIGR00344">
    <property type="entry name" value="alaS"/>
    <property type="match status" value="1"/>
</dbReference>
<dbReference type="PANTHER" id="PTHR11777:SF9">
    <property type="entry name" value="ALANINE--TRNA LIGASE, CYTOPLASMIC"/>
    <property type="match status" value="1"/>
</dbReference>
<dbReference type="PANTHER" id="PTHR11777">
    <property type="entry name" value="ALANYL-TRNA SYNTHETASE"/>
    <property type="match status" value="1"/>
</dbReference>
<dbReference type="Pfam" id="PF02272">
    <property type="entry name" value="DHHA1"/>
    <property type="match status" value="1"/>
</dbReference>
<dbReference type="Pfam" id="PF01411">
    <property type="entry name" value="tRNA-synt_2c"/>
    <property type="match status" value="1"/>
</dbReference>
<dbReference type="Pfam" id="PF07973">
    <property type="entry name" value="tRNA_SAD"/>
    <property type="match status" value="1"/>
</dbReference>
<dbReference type="PRINTS" id="PR00980">
    <property type="entry name" value="TRNASYNTHALA"/>
</dbReference>
<dbReference type="SMART" id="SM00863">
    <property type="entry name" value="tRNA_SAD"/>
    <property type="match status" value="1"/>
</dbReference>
<dbReference type="SUPFAM" id="SSF55681">
    <property type="entry name" value="Class II aaRS and biotin synthetases"/>
    <property type="match status" value="1"/>
</dbReference>
<dbReference type="SUPFAM" id="SSF101353">
    <property type="entry name" value="Putative anticodon-binding domain of alanyl-tRNA synthetase (AlaRS)"/>
    <property type="match status" value="1"/>
</dbReference>
<dbReference type="SUPFAM" id="SSF55186">
    <property type="entry name" value="ThrRS/AlaRS common domain"/>
    <property type="match status" value="1"/>
</dbReference>
<dbReference type="SUPFAM" id="SSF50447">
    <property type="entry name" value="Translation proteins"/>
    <property type="match status" value="1"/>
</dbReference>
<dbReference type="PROSITE" id="PS50860">
    <property type="entry name" value="AA_TRNA_LIGASE_II_ALA"/>
    <property type="match status" value="1"/>
</dbReference>
<feature type="chain" id="PRO_0000075063" description="Alanine--tRNA ligase">
    <location>
        <begin position="1"/>
        <end position="887"/>
    </location>
</feature>
<feature type="region of interest" description="Disordered" evidence="2">
    <location>
        <begin position="854"/>
        <end position="873"/>
    </location>
</feature>
<feature type="binding site" evidence="1">
    <location>
        <position position="564"/>
    </location>
    <ligand>
        <name>Zn(2+)</name>
        <dbReference type="ChEBI" id="CHEBI:29105"/>
    </ligand>
</feature>
<feature type="binding site" evidence="1">
    <location>
        <position position="568"/>
    </location>
    <ligand>
        <name>Zn(2+)</name>
        <dbReference type="ChEBI" id="CHEBI:29105"/>
    </ligand>
</feature>
<feature type="binding site" evidence="1">
    <location>
        <position position="676"/>
    </location>
    <ligand>
        <name>Zn(2+)</name>
        <dbReference type="ChEBI" id="CHEBI:29105"/>
    </ligand>
</feature>
<feature type="binding site" evidence="1">
    <location>
        <position position="680"/>
    </location>
    <ligand>
        <name>Zn(2+)</name>
        <dbReference type="ChEBI" id="CHEBI:29105"/>
    </ligand>
</feature>
<comment type="function">
    <text evidence="1">Catalyzes the attachment of alanine to tRNA(Ala) in a two-step reaction: alanine is first activated by ATP to form Ala-AMP and then transferred to the acceptor end of tRNA(Ala). Also edits incorrectly charged Ser-tRNA(Ala) and Gly-tRNA(Ala) via its editing domain.</text>
</comment>
<comment type="catalytic activity">
    <reaction evidence="1">
        <text>tRNA(Ala) + L-alanine + ATP = L-alanyl-tRNA(Ala) + AMP + diphosphate</text>
        <dbReference type="Rhea" id="RHEA:12540"/>
        <dbReference type="Rhea" id="RHEA-COMP:9657"/>
        <dbReference type="Rhea" id="RHEA-COMP:9923"/>
        <dbReference type="ChEBI" id="CHEBI:30616"/>
        <dbReference type="ChEBI" id="CHEBI:33019"/>
        <dbReference type="ChEBI" id="CHEBI:57972"/>
        <dbReference type="ChEBI" id="CHEBI:78442"/>
        <dbReference type="ChEBI" id="CHEBI:78497"/>
        <dbReference type="ChEBI" id="CHEBI:456215"/>
        <dbReference type="EC" id="6.1.1.7"/>
    </reaction>
</comment>
<comment type="cofactor">
    <cofactor evidence="1">
        <name>Zn(2+)</name>
        <dbReference type="ChEBI" id="CHEBI:29105"/>
    </cofactor>
    <text evidence="1">Binds 1 zinc ion per subunit.</text>
</comment>
<comment type="subcellular location">
    <subcellularLocation>
        <location evidence="1">Cytoplasm</location>
    </subcellularLocation>
</comment>
<comment type="domain">
    <text evidence="1">Consists of three domains; the N-terminal catalytic domain, the editing domain and the C-terminal C-Ala domain. The editing domain removes incorrectly charged amino acids, while the C-Ala domain, along with tRNA(Ala), serves as a bridge to cooperatively bring together the editing and aminoacylation centers thus stimulating deacylation of misacylated tRNAs.</text>
</comment>
<comment type="similarity">
    <text evidence="1">Belongs to the class-II aminoacyl-tRNA synthetase family.</text>
</comment>
<reference key="1">
    <citation type="journal article" date="2004" name="Proc. Natl. Acad. Sci. U.S.A.">
        <title>The louse-borne human pathogen Bartonella quintana is a genomic derivative of the zoonotic agent Bartonella henselae.</title>
        <authorList>
            <person name="Alsmark U.C.M."/>
            <person name="Frank A.C."/>
            <person name="Karlberg E.O."/>
            <person name="Legault B.-A."/>
            <person name="Ardell D.H."/>
            <person name="Canbaeck B."/>
            <person name="Eriksson A.-S."/>
            <person name="Naeslund A.K."/>
            <person name="Handley S.A."/>
            <person name="Huvet M."/>
            <person name="La Scola B."/>
            <person name="Holmberg M."/>
            <person name="Andersson S.G.E."/>
        </authorList>
    </citation>
    <scope>NUCLEOTIDE SEQUENCE [LARGE SCALE GENOMIC DNA]</scope>
    <source>
        <strain>ATCC 49882 / DSM 28221 / CCUG 30454 / Houston 1</strain>
    </source>
</reference>
<protein>
    <recommendedName>
        <fullName evidence="1">Alanine--tRNA ligase</fullName>
        <ecNumber evidence="1">6.1.1.7</ecNumber>
    </recommendedName>
    <alternativeName>
        <fullName evidence="1">Alanyl-tRNA synthetase</fullName>
        <shortName evidence="1">AlaRS</shortName>
    </alternativeName>
</protein>
<sequence>MNSVNSIRSTFLDYFQLNGHKIVSSSPLVPRNDPTLMFTNAGMVQFKNVFTGLEQRPYKQATTAQKCVRAGGKHNDLDNVGYTARHHTFFEMLGNFSFGDYFKEEAIFLSWNLLTKEFCLPEDKLLVTVYHNDDVSTELWRKISGLPDEKIVRIATADNFWAMGDTGPCGPCSEIFYDHGDEIWGGPPGSAYEDGDRFIEIWNLVFMQYEQVNKEKRVELPHPSIDTGMGLERIAAVLQGGHDNYDIDLFRALIAVSQEITGVKATGDFIASHRVIADHLRSSAFLIADGVLPSNEGRGYVLRRIMRRAMRHAHLLGAKEPLMWRLLPVLIHEMGQAYPELVRAESLISETLKLEEIRFRKTLERGLGLLSEASTDLKEGDHLNGEIAFKLYDTYGFPLDLTQDALRCRGISVDVAAFNKAMEGQKAKARANWSGSGETVTEAIWFSVRDQLGATEFLGYETEKSEGILTALVRDGEIVDDISSGQKAILVVNQTPFYGESGGQIGDSGTISGKNFVFEVHDTQKKADGVFIHIGEVKSGQARMSECVELTVDGVRRKKIRVNHSATHLLHEALRQVLGSHVTQKGSLVSPDRLRFDFSHPKSVSLEELEKIEDLANEIVLQNSEVTTRLMLVDDAISEGAMALFGEKYGDEVRVVSMGNRLEKGKLKSRWSIELCGGTHVERTGDIGLIHIVSESSVAAGVRRIEALTGTAARLYLSRQDARVHEIADLLKTSATDVEERVRILLEDRRKLEKELNDERKKSVLSGGIVKSDQEDITIINGISFMGRVVKNISPRDLKTLVDSGKKKIGSGVVAFIGVSEDGKGSAVLGVTDDLTHKLNAVDLVRILSGILGGQGGGGRPDMAQSGGPKGNKADEALAVLKASLEG</sequence>
<gene>
    <name evidence="1" type="primary">alaS</name>
    <name type="ordered locus">BH10220</name>
</gene>
<evidence type="ECO:0000255" key="1">
    <source>
        <dbReference type="HAMAP-Rule" id="MF_00036"/>
    </source>
</evidence>
<evidence type="ECO:0000256" key="2">
    <source>
        <dbReference type="SAM" id="MobiDB-lite"/>
    </source>
</evidence>
<name>SYA_BARHE</name>
<organism>
    <name type="scientific">Bartonella henselae (strain ATCC 49882 / DSM 28221 / CCUG 30454 / Houston 1)</name>
    <name type="common">Rochalimaea henselae</name>
    <dbReference type="NCBI Taxonomy" id="283166"/>
    <lineage>
        <taxon>Bacteria</taxon>
        <taxon>Pseudomonadati</taxon>
        <taxon>Pseudomonadota</taxon>
        <taxon>Alphaproteobacteria</taxon>
        <taxon>Hyphomicrobiales</taxon>
        <taxon>Bartonellaceae</taxon>
        <taxon>Bartonella</taxon>
    </lineage>
</organism>
<accession>Q6G2Z4</accession>
<proteinExistence type="inferred from homology"/>
<keyword id="KW-0030">Aminoacyl-tRNA synthetase</keyword>
<keyword id="KW-0067">ATP-binding</keyword>
<keyword id="KW-0963">Cytoplasm</keyword>
<keyword id="KW-0436">Ligase</keyword>
<keyword id="KW-0479">Metal-binding</keyword>
<keyword id="KW-0547">Nucleotide-binding</keyword>
<keyword id="KW-0648">Protein biosynthesis</keyword>
<keyword id="KW-0694">RNA-binding</keyword>
<keyword id="KW-0820">tRNA-binding</keyword>
<keyword id="KW-0862">Zinc</keyword>